<accession>P59142</accession>
<dbReference type="EMBL" id="AJ269690">
    <property type="protein sequence ID" value="CAC80630.1"/>
    <property type="molecule type" value="Genomic_DNA"/>
</dbReference>
<dbReference type="SMR" id="P59142"/>
<dbReference type="GO" id="GO:0009507">
    <property type="term" value="C:chloroplast"/>
    <property type="evidence" value="ECO:0007669"/>
    <property type="project" value="UniProtKB-SubCell"/>
</dbReference>
<dbReference type="GO" id="GO:0015935">
    <property type="term" value="C:small ribosomal subunit"/>
    <property type="evidence" value="ECO:0007669"/>
    <property type="project" value="InterPro"/>
</dbReference>
<dbReference type="GO" id="GO:0019843">
    <property type="term" value="F:rRNA binding"/>
    <property type="evidence" value="ECO:0007669"/>
    <property type="project" value="UniProtKB-UniRule"/>
</dbReference>
<dbReference type="GO" id="GO:0003735">
    <property type="term" value="F:structural constituent of ribosome"/>
    <property type="evidence" value="ECO:0007669"/>
    <property type="project" value="InterPro"/>
</dbReference>
<dbReference type="GO" id="GO:0042274">
    <property type="term" value="P:ribosomal small subunit biogenesis"/>
    <property type="evidence" value="ECO:0007669"/>
    <property type="project" value="TreeGrafter"/>
</dbReference>
<dbReference type="GO" id="GO:0006412">
    <property type="term" value="P:translation"/>
    <property type="evidence" value="ECO:0007669"/>
    <property type="project" value="UniProtKB-UniRule"/>
</dbReference>
<dbReference type="CDD" id="cd00165">
    <property type="entry name" value="S4"/>
    <property type="match status" value="1"/>
</dbReference>
<dbReference type="FunFam" id="1.10.1050.10:FF:000002">
    <property type="entry name" value="30S ribosomal protein S4, chloroplastic"/>
    <property type="match status" value="1"/>
</dbReference>
<dbReference type="FunFam" id="3.10.290.10:FF:000081">
    <property type="entry name" value="30S ribosomal protein S4, chloroplastic"/>
    <property type="match status" value="1"/>
</dbReference>
<dbReference type="Gene3D" id="1.10.1050.10">
    <property type="entry name" value="Ribosomal Protein S4 Delta 41, Chain A, domain 1"/>
    <property type="match status" value="1"/>
</dbReference>
<dbReference type="Gene3D" id="3.10.290.10">
    <property type="entry name" value="RNA-binding S4 domain"/>
    <property type="match status" value="1"/>
</dbReference>
<dbReference type="HAMAP" id="MF_01306_B">
    <property type="entry name" value="Ribosomal_uS4_B"/>
    <property type="match status" value="1"/>
</dbReference>
<dbReference type="InterPro" id="IPR022801">
    <property type="entry name" value="Ribosomal_uS4"/>
</dbReference>
<dbReference type="InterPro" id="IPR005709">
    <property type="entry name" value="Ribosomal_uS4_bac-type"/>
</dbReference>
<dbReference type="InterPro" id="IPR001912">
    <property type="entry name" value="Ribosomal_uS4_N"/>
</dbReference>
<dbReference type="InterPro" id="IPR002942">
    <property type="entry name" value="S4_RNA-bd"/>
</dbReference>
<dbReference type="InterPro" id="IPR036986">
    <property type="entry name" value="S4_RNA-bd_sf"/>
</dbReference>
<dbReference type="NCBIfam" id="NF003717">
    <property type="entry name" value="PRK05327.1"/>
    <property type="match status" value="1"/>
</dbReference>
<dbReference type="NCBIfam" id="TIGR01017">
    <property type="entry name" value="rpsD_bact"/>
    <property type="match status" value="1"/>
</dbReference>
<dbReference type="PANTHER" id="PTHR11831">
    <property type="entry name" value="30S 40S RIBOSOMAL PROTEIN"/>
    <property type="match status" value="1"/>
</dbReference>
<dbReference type="PANTHER" id="PTHR11831:SF4">
    <property type="entry name" value="SMALL RIBOSOMAL SUBUNIT PROTEIN US4M"/>
    <property type="match status" value="1"/>
</dbReference>
<dbReference type="Pfam" id="PF00163">
    <property type="entry name" value="Ribosomal_S4"/>
    <property type="match status" value="1"/>
</dbReference>
<dbReference type="Pfam" id="PF01479">
    <property type="entry name" value="S4"/>
    <property type="match status" value="1"/>
</dbReference>
<dbReference type="SMART" id="SM01390">
    <property type="entry name" value="Ribosomal_S4"/>
    <property type="match status" value="1"/>
</dbReference>
<dbReference type="SMART" id="SM00363">
    <property type="entry name" value="S4"/>
    <property type="match status" value="1"/>
</dbReference>
<dbReference type="SUPFAM" id="SSF55174">
    <property type="entry name" value="Alpha-L RNA-binding motif"/>
    <property type="match status" value="1"/>
</dbReference>
<dbReference type="PROSITE" id="PS50889">
    <property type="entry name" value="S4"/>
    <property type="match status" value="1"/>
</dbReference>
<comment type="function">
    <text evidence="1">One of the primary rRNA binding proteins, it binds directly to 16S rRNA where it nucleates assembly of the body of the 30S subunit.</text>
</comment>
<comment type="function">
    <text evidence="1">With S5 and S12 plays an important role in translational accuracy.</text>
</comment>
<comment type="subunit">
    <text evidence="1">Part of the 30S ribosomal subunit. Contacts protein S5. The interaction surface between S4 and S5 is involved in control of translational fidelity (By similarity).</text>
</comment>
<comment type="subcellular location">
    <subcellularLocation>
        <location>Plastid</location>
        <location>Chloroplast</location>
    </subcellularLocation>
</comment>
<comment type="similarity">
    <text evidence="2">Belongs to the universal ribosomal protein uS4 family.</text>
</comment>
<protein>
    <recommendedName>
        <fullName evidence="2">Small ribosomal subunit protein uS4c</fullName>
    </recommendedName>
    <alternativeName>
        <fullName>30S ribosomal protein S4, chloroplastic</fullName>
    </alternativeName>
</protein>
<organism>
    <name type="scientific">Hypnum cupressiforme</name>
    <name type="common">Cypress-leaved plait-moss</name>
    <dbReference type="NCBI Taxonomy" id="53011"/>
    <lineage>
        <taxon>Eukaryota</taxon>
        <taxon>Viridiplantae</taxon>
        <taxon>Streptophyta</taxon>
        <taxon>Embryophyta</taxon>
        <taxon>Bryophyta</taxon>
        <taxon>Bryophytina</taxon>
        <taxon>Bryopsida</taxon>
        <taxon>Bryidae</taxon>
        <taxon>Hypnanae</taxon>
        <taxon>Hypnales</taxon>
        <taxon>Hypnaceae</taxon>
        <taxon>Hypnum</taxon>
    </lineage>
</organism>
<sequence>MSRYRGPRVRIIRRLGTLPGLTNKTPQLKSSSINQSISNKKISQYRIRLEEKQKLRFHYGITERQLLNYVRIARKAKGSTGEVLLQLLEMRLDNVTFRLGMAPTIPGARQLVNHRHILVNDCIVDIPSYRCKPQDFITIKNQRKSETIISKNIEFYQKSKIPNHLTYSSLEKKGLVNQILDRESIGLKINELLVVEYYSRQA</sequence>
<gene>
    <name type="primary">rps4</name>
</gene>
<reference key="1">
    <citation type="journal article" date="2002" name="Cryptogam. Bryol.">
        <title>The systematic position of the Hypoptergiaceae (Bryopsida) inferred from rps4 gene sequences.</title>
        <authorList>
            <person name="Bloecher R."/>
            <person name="Capesius I."/>
        </authorList>
    </citation>
    <scope>NUCLEOTIDE SEQUENCE [GENOMIC DNA]</scope>
    <source>
        <tissue>Gametophyte</tissue>
    </source>
</reference>
<keyword id="KW-0150">Chloroplast</keyword>
<keyword id="KW-0934">Plastid</keyword>
<keyword id="KW-0687">Ribonucleoprotein</keyword>
<keyword id="KW-0689">Ribosomal protein</keyword>
<keyword id="KW-0694">RNA-binding</keyword>
<keyword id="KW-0699">rRNA-binding</keyword>
<proteinExistence type="inferred from homology"/>
<feature type="chain" id="PRO_0000132606" description="Small ribosomal subunit protein uS4c">
    <location>
        <begin position="1"/>
        <end position="202"/>
    </location>
</feature>
<feature type="domain" description="S4 RNA-binding">
    <location>
        <begin position="90"/>
        <end position="153"/>
    </location>
</feature>
<geneLocation type="chloroplast"/>
<name>RR4_HYPCP</name>
<evidence type="ECO:0000250" key="1"/>
<evidence type="ECO:0000305" key="2"/>